<keyword id="KW-0687">Ribonucleoprotein</keyword>
<keyword id="KW-0689">Ribosomal protein</keyword>
<keyword id="KW-0694">RNA-binding</keyword>
<keyword id="KW-0699">rRNA-binding</keyword>
<sequence>MTKLSRKLQTQKRHRRLRRSVIGDATRPRLSVFRSNNHIYAQVIDDSAQKTICSASTVDKELREKSDKLPSDCNSSSIVGKLLANRAIKKGIKQVIFDRGGNLYHGRVKALADAAREAGLEF</sequence>
<protein>
    <recommendedName>
        <fullName evidence="1">Large ribosomal subunit protein uL18</fullName>
    </recommendedName>
    <alternativeName>
        <fullName evidence="3">50S ribosomal protein L18</fullName>
    </alternativeName>
</protein>
<feature type="chain" id="PRO_0000251342" description="Large ribosomal subunit protein uL18">
    <location>
        <begin position="1"/>
        <end position="122"/>
    </location>
</feature>
<feature type="region of interest" description="Disordered" evidence="2">
    <location>
        <begin position="1"/>
        <end position="21"/>
    </location>
</feature>
<feature type="compositionally biased region" description="Basic residues" evidence="2">
    <location>
        <begin position="1"/>
        <end position="19"/>
    </location>
</feature>
<name>RL18_PROM9</name>
<comment type="function">
    <text evidence="1">This is one of the proteins that bind and probably mediate the attachment of the 5S RNA into the large ribosomal subunit, where it forms part of the central protuberance.</text>
</comment>
<comment type="subunit">
    <text evidence="1">Part of the 50S ribosomal subunit; part of the 5S rRNA/L5/L18/L25 subcomplex. Contacts the 5S and 23S rRNAs.</text>
</comment>
<comment type="similarity">
    <text evidence="1">Belongs to the universal ribosomal protein uL18 family.</text>
</comment>
<organism>
    <name type="scientific">Prochlorococcus marinus (strain MIT 9312)</name>
    <dbReference type="NCBI Taxonomy" id="74546"/>
    <lineage>
        <taxon>Bacteria</taxon>
        <taxon>Bacillati</taxon>
        <taxon>Cyanobacteriota</taxon>
        <taxon>Cyanophyceae</taxon>
        <taxon>Synechococcales</taxon>
        <taxon>Prochlorococcaceae</taxon>
        <taxon>Prochlorococcus</taxon>
    </lineage>
</organism>
<evidence type="ECO:0000255" key="1">
    <source>
        <dbReference type="HAMAP-Rule" id="MF_01337"/>
    </source>
</evidence>
<evidence type="ECO:0000256" key="2">
    <source>
        <dbReference type="SAM" id="MobiDB-lite"/>
    </source>
</evidence>
<evidence type="ECO:0000305" key="3"/>
<reference key="1">
    <citation type="journal article" date="2006" name="Science">
        <title>Genomic islands and the ecology and evolution of Prochlorococcus.</title>
        <authorList>
            <person name="Coleman M.L."/>
            <person name="Sullivan M.B."/>
            <person name="Martiny A.C."/>
            <person name="Steglich C."/>
            <person name="Barry K."/>
            <person name="Delong E.F."/>
            <person name="Chisholm S.W."/>
        </authorList>
    </citation>
    <scope>NUCLEOTIDE SEQUENCE [LARGE SCALE GENOMIC DNA]</scope>
    <source>
        <strain>MIT 9312</strain>
    </source>
</reference>
<proteinExistence type="inferred from homology"/>
<accession>Q318J9</accession>
<dbReference type="EMBL" id="CP000111">
    <property type="protein sequence ID" value="ABB50696.1"/>
    <property type="molecule type" value="Genomic_DNA"/>
</dbReference>
<dbReference type="RefSeq" id="WP_011377178.1">
    <property type="nucleotide sequence ID" value="NC_007577.1"/>
</dbReference>
<dbReference type="SMR" id="Q318J9"/>
<dbReference type="STRING" id="74546.PMT9312_1635"/>
<dbReference type="KEGG" id="pmi:PMT9312_1635"/>
<dbReference type="eggNOG" id="COG0256">
    <property type="taxonomic scope" value="Bacteria"/>
</dbReference>
<dbReference type="HOGENOM" id="CLU_098841_0_1_3"/>
<dbReference type="OrthoDB" id="9810939at2"/>
<dbReference type="Proteomes" id="UP000002715">
    <property type="component" value="Chromosome"/>
</dbReference>
<dbReference type="GO" id="GO:0022625">
    <property type="term" value="C:cytosolic large ribosomal subunit"/>
    <property type="evidence" value="ECO:0007669"/>
    <property type="project" value="TreeGrafter"/>
</dbReference>
<dbReference type="GO" id="GO:0008097">
    <property type="term" value="F:5S rRNA binding"/>
    <property type="evidence" value="ECO:0007669"/>
    <property type="project" value="TreeGrafter"/>
</dbReference>
<dbReference type="GO" id="GO:0003735">
    <property type="term" value="F:structural constituent of ribosome"/>
    <property type="evidence" value="ECO:0007669"/>
    <property type="project" value="InterPro"/>
</dbReference>
<dbReference type="GO" id="GO:0006412">
    <property type="term" value="P:translation"/>
    <property type="evidence" value="ECO:0007669"/>
    <property type="project" value="UniProtKB-UniRule"/>
</dbReference>
<dbReference type="CDD" id="cd00432">
    <property type="entry name" value="Ribosomal_L18_L5e"/>
    <property type="match status" value="1"/>
</dbReference>
<dbReference type="FunFam" id="3.30.420.100:FF:000001">
    <property type="entry name" value="50S ribosomal protein L18"/>
    <property type="match status" value="1"/>
</dbReference>
<dbReference type="Gene3D" id="3.30.420.100">
    <property type="match status" value="1"/>
</dbReference>
<dbReference type="HAMAP" id="MF_01337_B">
    <property type="entry name" value="Ribosomal_uL18_B"/>
    <property type="match status" value="1"/>
</dbReference>
<dbReference type="InterPro" id="IPR004389">
    <property type="entry name" value="Ribosomal_uL18_bac-type"/>
</dbReference>
<dbReference type="InterPro" id="IPR005484">
    <property type="entry name" value="Ribosomal_uL18_bac/euk"/>
</dbReference>
<dbReference type="NCBIfam" id="TIGR00060">
    <property type="entry name" value="L18_bact"/>
    <property type="match status" value="1"/>
</dbReference>
<dbReference type="PANTHER" id="PTHR12899">
    <property type="entry name" value="39S RIBOSOMAL PROTEIN L18, MITOCHONDRIAL"/>
    <property type="match status" value="1"/>
</dbReference>
<dbReference type="PANTHER" id="PTHR12899:SF3">
    <property type="entry name" value="LARGE RIBOSOMAL SUBUNIT PROTEIN UL18M"/>
    <property type="match status" value="1"/>
</dbReference>
<dbReference type="Pfam" id="PF00861">
    <property type="entry name" value="Ribosomal_L18p"/>
    <property type="match status" value="1"/>
</dbReference>
<dbReference type="SUPFAM" id="SSF53137">
    <property type="entry name" value="Translational machinery components"/>
    <property type="match status" value="1"/>
</dbReference>
<gene>
    <name evidence="1" type="primary">rplR</name>
    <name evidence="1" type="synonym">rpl18</name>
    <name type="ordered locus">PMT9312_1635</name>
</gene>